<accession>P36987</accession>
<feature type="chain" id="PRO_0000087659" description="U1-plectoxin-Pt1e" evidence="2">
    <location>
        <begin position="1"/>
        <end position="24" status="greater than"/>
    </location>
</feature>
<feature type="disulfide bond" evidence="1">
    <location>
        <begin position="4"/>
        <end position="18"/>
    </location>
</feature>
<feature type="disulfide bond" evidence="1">
    <location>
        <begin position="17"/>
        <end status="unknown"/>
    </location>
</feature>
<feature type="disulfide bond" evidence="1">
    <location>
        <begin position="21"/>
        <end status="unknown"/>
    </location>
</feature>
<feature type="non-terminal residue" evidence="4">
    <location>
        <position position="24"/>
    </location>
</feature>
<name>TX22E_PLETR</name>
<keyword id="KW-0903">Direct protein sequencing</keyword>
<keyword id="KW-1015">Disulfide bond</keyword>
<keyword id="KW-0528">Neurotoxin</keyword>
<keyword id="KW-0964">Secreted</keyword>
<keyword id="KW-0800">Toxin</keyword>
<proteinExistence type="evidence at protein level"/>
<sequence>ALKCQGWVDYCNGNVECCNECVMY</sequence>
<organism>
    <name type="scientific">Plectreurys tristis</name>
    <name type="common">Spider</name>
    <name type="synonym">Plectreurys bispinosus</name>
    <dbReference type="NCBI Taxonomy" id="33319"/>
    <lineage>
        <taxon>Eukaryota</taxon>
        <taxon>Metazoa</taxon>
        <taxon>Ecdysozoa</taxon>
        <taxon>Arthropoda</taxon>
        <taxon>Chelicerata</taxon>
        <taxon>Arachnida</taxon>
        <taxon>Araneae</taxon>
        <taxon>Araneomorphae</taxon>
        <taxon>Haplogynae</taxon>
        <taxon>Pholcoidea</taxon>
        <taxon>Plectreuridae</taxon>
        <taxon>Plectreurys</taxon>
    </lineage>
</organism>
<dbReference type="PIR" id="E53613">
    <property type="entry name" value="E53613"/>
</dbReference>
<dbReference type="ArachnoServer" id="AS000394">
    <property type="toxin name" value="U1-plectoxin-Pt1e"/>
</dbReference>
<dbReference type="GO" id="GO:0005576">
    <property type="term" value="C:extracellular region"/>
    <property type="evidence" value="ECO:0007669"/>
    <property type="project" value="UniProtKB-SubCell"/>
</dbReference>
<dbReference type="GO" id="GO:0090729">
    <property type="term" value="F:toxin activity"/>
    <property type="evidence" value="ECO:0007669"/>
    <property type="project" value="UniProtKB-KW"/>
</dbReference>
<reference key="1">
    <citation type="journal article" date="1994" name="J. Biol. Chem.">
        <title>Isolation and sequencing of insecticidal peptides from the primitive hunting spider, Plectreurys tristis (Simon).</title>
        <authorList>
            <person name="Quistad G.B."/>
            <person name="Skinner W.S."/>
        </authorList>
    </citation>
    <scope>PROTEIN SEQUENCE</scope>
    <scope>SUBCELLULAR LOCATION</scope>
    <source>
        <tissue>Venom</tissue>
    </source>
</reference>
<comment type="function">
    <text>Potent toxin that may paralyze and/or kill insect pests such as H.virescens (lepidoptera), S.exigua (beet armyworm) and M.sexta (tobacco hornworm).</text>
</comment>
<comment type="subcellular location">
    <subcellularLocation>
        <location evidence="2">Secreted</location>
    </subcellularLocation>
</comment>
<comment type="tissue specificity">
    <text evidence="4">Expressed by the venom gland.</text>
</comment>
<comment type="PTM">
    <text evidence="3">Contains 5 disulfide bonds.</text>
</comment>
<comment type="similarity">
    <text evidence="3">Belongs to the neurotoxin 02 (plectoxin) family. 02 (plectoxin) subfamily.</text>
</comment>
<evidence type="ECO:0000250" key="1">
    <source>
        <dbReference type="UniProtKB" id="P83559"/>
    </source>
</evidence>
<evidence type="ECO:0000269" key="2">
    <source>
    </source>
</evidence>
<evidence type="ECO:0000305" key="3"/>
<evidence type="ECO:0000305" key="4">
    <source>
    </source>
</evidence>
<protein>
    <recommendedName>
        <fullName evidence="3">U1-plectoxin-Pt1e</fullName>
        <shortName evidence="3">U1-PLTX-Pt1e</shortName>
    </recommendedName>
    <alternativeName>
        <fullName>Plectoxin XIII</fullName>
        <shortName>PLT-XIII</shortName>
        <shortName>PLTXIII</shortName>
    </alternativeName>
    <alternativeName>
        <fullName>Plectoxin-13</fullName>
    </alternativeName>
</protein>